<sequence>MGKCRGLRTARKLRSHRRDQKWHDKQYKKAHLGTALKANPFGGASHAKGIVLEKVGVEAKQPNSAIRKCVRVQLIKNGKKITAFVPNDGCLNFIEENDEVLVAGFGRKGHAVGDIPGVRFKVVKVANVSLLALYKGKKERPRS</sequence>
<gene>
    <name type="primary">Rps23</name>
</gene>
<accession>P62267</accession>
<accession>P39028</accession>
<accession>Q542K7</accession>
<evidence type="ECO:0000250" key="1">
    <source>
        <dbReference type="UniProtKB" id="P62266"/>
    </source>
</evidence>
<evidence type="ECO:0000250" key="2">
    <source>
        <dbReference type="UniProtKB" id="Q6SA96"/>
    </source>
</evidence>
<evidence type="ECO:0000256" key="3">
    <source>
        <dbReference type="SAM" id="MobiDB-lite"/>
    </source>
</evidence>
<evidence type="ECO:0000269" key="4">
    <source>
    </source>
</evidence>
<evidence type="ECO:0000305" key="5"/>
<evidence type="ECO:0007744" key="6">
    <source>
        <dbReference type="PDB" id="7CPU"/>
    </source>
</evidence>
<evidence type="ECO:0007744" key="7">
    <source>
        <dbReference type="PDB" id="7CPV"/>
    </source>
</evidence>
<evidence type="ECO:0007744" key="8">
    <source>
    </source>
</evidence>
<reference key="1">
    <citation type="journal article" date="2005" name="Science">
        <title>The transcriptional landscape of the mammalian genome.</title>
        <authorList>
            <person name="Carninci P."/>
            <person name="Kasukawa T."/>
            <person name="Katayama S."/>
            <person name="Gough J."/>
            <person name="Frith M.C."/>
            <person name="Maeda N."/>
            <person name="Oyama R."/>
            <person name="Ravasi T."/>
            <person name="Lenhard B."/>
            <person name="Wells C."/>
            <person name="Kodzius R."/>
            <person name="Shimokawa K."/>
            <person name="Bajic V.B."/>
            <person name="Brenner S.E."/>
            <person name="Batalov S."/>
            <person name="Forrest A.R."/>
            <person name="Zavolan M."/>
            <person name="Davis M.J."/>
            <person name="Wilming L.G."/>
            <person name="Aidinis V."/>
            <person name="Allen J.E."/>
            <person name="Ambesi-Impiombato A."/>
            <person name="Apweiler R."/>
            <person name="Aturaliya R.N."/>
            <person name="Bailey T.L."/>
            <person name="Bansal M."/>
            <person name="Baxter L."/>
            <person name="Beisel K.W."/>
            <person name="Bersano T."/>
            <person name="Bono H."/>
            <person name="Chalk A.M."/>
            <person name="Chiu K.P."/>
            <person name="Choudhary V."/>
            <person name="Christoffels A."/>
            <person name="Clutterbuck D.R."/>
            <person name="Crowe M.L."/>
            <person name="Dalla E."/>
            <person name="Dalrymple B.P."/>
            <person name="de Bono B."/>
            <person name="Della Gatta G."/>
            <person name="di Bernardo D."/>
            <person name="Down T."/>
            <person name="Engstrom P."/>
            <person name="Fagiolini M."/>
            <person name="Faulkner G."/>
            <person name="Fletcher C.F."/>
            <person name="Fukushima T."/>
            <person name="Furuno M."/>
            <person name="Futaki S."/>
            <person name="Gariboldi M."/>
            <person name="Georgii-Hemming P."/>
            <person name="Gingeras T.R."/>
            <person name="Gojobori T."/>
            <person name="Green R.E."/>
            <person name="Gustincich S."/>
            <person name="Harbers M."/>
            <person name="Hayashi Y."/>
            <person name="Hensch T.K."/>
            <person name="Hirokawa N."/>
            <person name="Hill D."/>
            <person name="Huminiecki L."/>
            <person name="Iacono M."/>
            <person name="Ikeo K."/>
            <person name="Iwama A."/>
            <person name="Ishikawa T."/>
            <person name="Jakt M."/>
            <person name="Kanapin A."/>
            <person name="Katoh M."/>
            <person name="Kawasawa Y."/>
            <person name="Kelso J."/>
            <person name="Kitamura H."/>
            <person name="Kitano H."/>
            <person name="Kollias G."/>
            <person name="Krishnan S.P."/>
            <person name="Kruger A."/>
            <person name="Kummerfeld S.K."/>
            <person name="Kurochkin I.V."/>
            <person name="Lareau L.F."/>
            <person name="Lazarevic D."/>
            <person name="Lipovich L."/>
            <person name="Liu J."/>
            <person name="Liuni S."/>
            <person name="McWilliam S."/>
            <person name="Madan Babu M."/>
            <person name="Madera M."/>
            <person name="Marchionni L."/>
            <person name="Matsuda H."/>
            <person name="Matsuzawa S."/>
            <person name="Miki H."/>
            <person name="Mignone F."/>
            <person name="Miyake S."/>
            <person name="Morris K."/>
            <person name="Mottagui-Tabar S."/>
            <person name="Mulder N."/>
            <person name="Nakano N."/>
            <person name="Nakauchi H."/>
            <person name="Ng P."/>
            <person name="Nilsson R."/>
            <person name="Nishiguchi S."/>
            <person name="Nishikawa S."/>
            <person name="Nori F."/>
            <person name="Ohara O."/>
            <person name="Okazaki Y."/>
            <person name="Orlando V."/>
            <person name="Pang K.C."/>
            <person name="Pavan W.J."/>
            <person name="Pavesi G."/>
            <person name="Pesole G."/>
            <person name="Petrovsky N."/>
            <person name="Piazza S."/>
            <person name="Reed J."/>
            <person name="Reid J.F."/>
            <person name="Ring B.Z."/>
            <person name="Ringwald M."/>
            <person name="Rost B."/>
            <person name="Ruan Y."/>
            <person name="Salzberg S.L."/>
            <person name="Sandelin A."/>
            <person name="Schneider C."/>
            <person name="Schoenbach C."/>
            <person name="Sekiguchi K."/>
            <person name="Semple C.A."/>
            <person name="Seno S."/>
            <person name="Sessa L."/>
            <person name="Sheng Y."/>
            <person name="Shibata Y."/>
            <person name="Shimada H."/>
            <person name="Shimada K."/>
            <person name="Silva D."/>
            <person name="Sinclair B."/>
            <person name="Sperling S."/>
            <person name="Stupka E."/>
            <person name="Sugiura K."/>
            <person name="Sultana R."/>
            <person name="Takenaka Y."/>
            <person name="Taki K."/>
            <person name="Tammoja K."/>
            <person name="Tan S.L."/>
            <person name="Tang S."/>
            <person name="Taylor M.S."/>
            <person name="Tegner J."/>
            <person name="Teichmann S.A."/>
            <person name="Ueda H.R."/>
            <person name="van Nimwegen E."/>
            <person name="Verardo R."/>
            <person name="Wei C.L."/>
            <person name="Yagi K."/>
            <person name="Yamanishi H."/>
            <person name="Zabarovsky E."/>
            <person name="Zhu S."/>
            <person name="Zimmer A."/>
            <person name="Hide W."/>
            <person name="Bult C."/>
            <person name="Grimmond S.M."/>
            <person name="Teasdale R.D."/>
            <person name="Liu E.T."/>
            <person name="Brusic V."/>
            <person name="Quackenbush J."/>
            <person name="Wahlestedt C."/>
            <person name="Mattick J.S."/>
            <person name="Hume D.A."/>
            <person name="Kai C."/>
            <person name="Sasaki D."/>
            <person name="Tomaru Y."/>
            <person name="Fukuda S."/>
            <person name="Kanamori-Katayama M."/>
            <person name="Suzuki M."/>
            <person name="Aoki J."/>
            <person name="Arakawa T."/>
            <person name="Iida J."/>
            <person name="Imamura K."/>
            <person name="Itoh M."/>
            <person name="Kato T."/>
            <person name="Kawaji H."/>
            <person name="Kawagashira N."/>
            <person name="Kawashima T."/>
            <person name="Kojima M."/>
            <person name="Kondo S."/>
            <person name="Konno H."/>
            <person name="Nakano K."/>
            <person name="Ninomiya N."/>
            <person name="Nishio T."/>
            <person name="Okada M."/>
            <person name="Plessy C."/>
            <person name="Shibata K."/>
            <person name="Shiraki T."/>
            <person name="Suzuki S."/>
            <person name="Tagami M."/>
            <person name="Waki K."/>
            <person name="Watahiki A."/>
            <person name="Okamura-Oho Y."/>
            <person name="Suzuki H."/>
            <person name="Kawai J."/>
            <person name="Hayashizaki Y."/>
        </authorList>
    </citation>
    <scope>NUCLEOTIDE SEQUENCE [LARGE SCALE MRNA]</scope>
    <source>
        <strain>C57BL/6J</strain>
        <strain>NOD</strain>
        <tissue>Hippocampus</tissue>
        <tissue>Kidney</tissue>
        <tissue>Thymus</tissue>
    </source>
</reference>
<reference key="2">
    <citation type="journal article" date="2004" name="Genome Res.">
        <title>The status, quality, and expansion of the NIH full-length cDNA project: the Mammalian Gene Collection (MGC).</title>
        <authorList>
            <consortium name="The MGC Project Team"/>
        </authorList>
    </citation>
    <scope>NUCLEOTIDE SEQUENCE [LARGE SCALE MRNA]</scope>
    <source>
        <strain>FVB/N</strain>
        <tissue>Mammary tumor</tissue>
    </source>
</reference>
<reference key="3">
    <citation type="journal article" date="2010" name="Cell">
        <title>A tissue-specific atlas of mouse protein phosphorylation and expression.</title>
        <authorList>
            <person name="Huttlin E.L."/>
            <person name="Jedrychowski M.P."/>
            <person name="Elias J.E."/>
            <person name="Goswami T."/>
            <person name="Rad R."/>
            <person name="Beausoleil S.A."/>
            <person name="Villen J."/>
            <person name="Haas W."/>
            <person name="Sowa M.E."/>
            <person name="Gygi S.P."/>
        </authorList>
    </citation>
    <scope>IDENTIFICATION BY MASS SPECTROMETRY [LARGE SCALE ANALYSIS]</scope>
    <source>
        <tissue>Brain</tissue>
        <tissue>Brown adipose tissue</tissue>
        <tissue>Heart</tissue>
        <tissue>Kidney</tissue>
        <tissue>Liver</tissue>
        <tissue>Lung</tissue>
        <tissue>Pancreas</tissue>
        <tissue>Spleen</tissue>
        <tissue>Testis</tissue>
    </source>
</reference>
<reference key="4">
    <citation type="journal article" date="2013" name="Mol. Cell">
        <title>SIRT5-mediated lysine desuccinylation impacts diverse metabolic pathways.</title>
        <authorList>
            <person name="Park J."/>
            <person name="Chen Y."/>
            <person name="Tishkoff D.X."/>
            <person name="Peng C."/>
            <person name="Tan M."/>
            <person name="Dai L."/>
            <person name="Xie Z."/>
            <person name="Zhang Y."/>
            <person name="Zwaans B.M."/>
            <person name="Skinner M.E."/>
            <person name="Lombard D.B."/>
            <person name="Zhao Y."/>
        </authorList>
    </citation>
    <scope>SUCCINYLATION [LARGE SCALE ANALYSIS] AT LYS-54</scope>
    <scope>IDENTIFICATION BY MASS SPECTROMETRY [LARGE SCALE ANALYSIS]</scope>
    <source>
        <tissue>Embryonic fibroblast</tissue>
    </source>
</reference>
<reference evidence="6 7" key="5">
    <citation type="journal article" date="2022" name="Nature">
        <title>A male germ-cell-specific ribosome controls male fertility.</title>
        <authorList>
            <person name="Li H."/>
            <person name="Huo Y."/>
            <person name="He X."/>
            <person name="Yao L."/>
            <person name="Zhang H."/>
            <person name="Cui Y."/>
            <person name="Xiao H."/>
            <person name="Xie W."/>
            <person name="Zhang D."/>
            <person name="Wang Y."/>
            <person name="Zhang S."/>
            <person name="Tu H."/>
            <person name="Cheng Y."/>
            <person name="Guo Y."/>
            <person name="Cao X."/>
            <person name="Zhu Y."/>
            <person name="Jiang T."/>
            <person name="Guo X."/>
            <person name="Qin Y."/>
            <person name="Sha J."/>
        </authorList>
    </citation>
    <scope>STRUCTURE BY ELECTRON MICROSCOPY (3.03 ANGSTROMS) OF RIBOSOME</scope>
    <scope>FUNCTION</scope>
    <scope>SUBUNIT</scope>
    <scope>SUBCELLULAR LOCATION</scope>
</reference>
<name>RS23_MOUSE</name>
<keyword id="KW-0002">3D-structure</keyword>
<keyword id="KW-0007">Acetylation</keyword>
<keyword id="KW-0963">Cytoplasm</keyword>
<keyword id="KW-0256">Endoplasmic reticulum</keyword>
<keyword id="KW-0379">Hydroxylation</keyword>
<keyword id="KW-1017">Isopeptide bond</keyword>
<keyword id="KW-0539">Nucleus</keyword>
<keyword id="KW-1185">Reference proteome</keyword>
<keyword id="KW-0687">Ribonucleoprotein</keyword>
<keyword id="KW-0689">Ribosomal protein</keyword>
<keyword id="KW-0832">Ubl conjugation</keyword>
<feature type="chain" id="PRO_0000146458" description="Small ribosomal subunit protein uS12">
    <location>
        <begin position="1"/>
        <end position="143"/>
    </location>
</feature>
<feature type="region of interest" description="Disordered" evidence="3">
    <location>
        <begin position="1"/>
        <end position="26"/>
    </location>
</feature>
<feature type="compositionally biased region" description="Basic residues" evidence="3">
    <location>
        <begin position="1"/>
        <end position="20"/>
    </location>
</feature>
<feature type="modified residue" description="N6-succinyllysine" evidence="8">
    <location>
        <position position="54"/>
    </location>
</feature>
<feature type="modified residue" description="3-hydroxyproline" evidence="1">
    <location>
        <position position="62"/>
    </location>
</feature>
<feature type="modified residue" description="N6-acetyllysine" evidence="1">
    <location>
        <position position="135"/>
    </location>
</feature>
<feature type="cross-link" description="Glycyl lysine isopeptide (Lys-Gly) (interchain with G-Cter in SUMO2)" evidence="1">
    <location>
        <position position="37"/>
    </location>
</feature>
<organism>
    <name type="scientific">Mus musculus</name>
    <name type="common">Mouse</name>
    <dbReference type="NCBI Taxonomy" id="10090"/>
    <lineage>
        <taxon>Eukaryota</taxon>
        <taxon>Metazoa</taxon>
        <taxon>Chordata</taxon>
        <taxon>Craniata</taxon>
        <taxon>Vertebrata</taxon>
        <taxon>Euteleostomi</taxon>
        <taxon>Mammalia</taxon>
        <taxon>Eutheria</taxon>
        <taxon>Euarchontoglires</taxon>
        <taxon>Glires</taxon>
        <taxon>Rodentia</taxon>
        <taxon>Myomorpha</taxon>
        <taxon>Muroidea</taxon>
        <taxon>Muridae</taxon>
        <taxon>Murinae</taxon>
        <taxon>Mus</taxon>
        <taxon>Mus</taxon>
    </lineage>
</organism>
<proteinExistence type="evidence at protein level"/>
<protein>
    <recommendedName>
        <fullName evidence="5">Small ribosomal subunit protein uS12</fullName>
    </recommendedName>
    <alternativeName>
        <fullName>40S ribosomal protein S23</fullName>
    </alternativeName>
</protein>
<dbReference type="EMBL" id="AK002573">
    <property type="protein sequence ID" value="BAB22198.1"/>
    <property type="molecule type" value="mRNA"/>
</dbReference>
<dbReference type="EMBL" id="AK010594">
    <property type="protein sequence ID" value="BAB27050.1"/>
    <property type="molecule type" value="mRNA"/>
</dbReference>
<dbReference type="EMBL" id="AK010608">
    <property type="protein sequence ID" value="BAB27058.1"/>
    <property type="molecule type" value="mRNA"/>
</dbReference>
<dbReference type="EMBL" id="AK012438">
    <property type="protein sequence ID" value="BAB28238.1"/>
    <property type="molecule type" value="mRNA"/>
</dbReference>
<dbReference type="EMBL" id="AK013720">
    <property type="protein sequence ID" value="BAB28969.1"/>
    <property type="molecule type" value="mRNA"/>
</dbReference>
<dbReference type="EMBL" id="AK050580">
    <property type="protein sequence ID" value="BAC34329.1"/>
    <property type="molecule type" value="mRNA"/>
</dbReference>
<dbReference type="EMBL" id="AK088085">
    <property type="protein sequence ID" value="BAC40136.1"/>
    <property type="molecule type" value="mRNA"/>
</dbReference>
<dbReference type="EMBL" id="AK166994">
    <property type="protein sequence ID" value="BAE39173.1"/>
    <property type="molecule type" value="mRNA"/>
</dbReference>
<dbReference type="EMBL" id="AK168587">
    <property type="protein sequence ID" value="BAE40456.1"/>
    <property type="molecule type" value="mRNA"/>
</dbReference>
<dbReference type="EMBL" id="BC002145">
    <property type="protein sequence ID" value="AAH02145.1"/>
    <property type="molecule type" value="mRNA"/>
</dbReference>
<dbReference type="EMBL" id="BC054435">
    <property type="protein sequence ID" value="AAH54435.1"/>
    <property type="molecule type" value="mRNA"/>
</dbReference>
<dbReference type="EMBL" id="BC078418">
    <property type="protein sequence ID" value="AAH78418.1"/>
    <property type="molecule type" value="mRNA"/>
</dbReference>
<dbReference type="CCDS" id="CCDS26674.1"/>
<dbReference type="RefSeq" id="NP_077137.1">
    <property type="nucleotide sequence ID" value="NM_024175.3"/>
</dbReference>
<dbReference type="PDB" id="7CPU">
    <property type="method" value="EM"/>
    <property type="resolution" value="2.82 A"/>
    <property type="chains" value="SX=1-143"/>
</dbReference>
<dbReference type="PDB" id="7CPV">
    <property type="method" value="EM"/>
    <property type="resolution" value="3.03 A"/>
    <property type="chains" value="SX=1-143"/>
</dbReference>
<dbReference type="PDB" id="7LS1">
    <property type="method" value="EM"/>
    <property type="resolution" value="3.30 A"/>
    <property type="chains" value="E3=1-143"/>
</dbReference>
<dbReference type="PDB" id="7LS2">
    <property type="method" value="EM"/>
    <property type="resolution" value="3.10 A"/>
    <property type="chains" value="E3=1-143"/>
</dbReference>
<dbReference type="PDBsum" id="7CPU"/>
<dbReference type="PDBsum" id="7CPV"/>
<dbReference type="PDBsum" id="7LS1"/>
<dbReference type="PDBsum" id="7LS2"/>
<dbReference type="EMDB" id="EMD-23500"/>
<dbReference type="EMDB" id="EMD-23501"/>
<dbReference type="EMDB" id="EMD-30432"/>
<dbReference type="EMDB" id="EMD-30433"/>
<dbReference type="SMR" id="P62267"/>
<dbReference type="BioGRID" id="211500">
    <property type="interactions" value="96"/>
</dbReference>
<dbReference type="ComplexPortal" id="CPX-5261">
    <property type="entry name" value="40S cytosolic small ribosomal subunit"/>
</dbReference>
<dbReference type="FunCoup" id="P62267">
    <property type="interactions" value="2417"/>
</dbReference>
<dbReference type="IntAct" id="P62267">
    <property type="interactions" value="3"/>
</dbReference>
<dbReference type="STRING" id="10090.ENSMUSP00000054490"/>
<dbReference type="GlyGen" id="P62267">
    <property type="glycosylation" value="1 site, 1 O-linked glycan (1 site)"/>
</dbReference>
<dbReference type="iPTMnet" id="P62267"/>
<dbReference type="PhosphoSitePlus" id="P62267"/>
<dbReference type="SwissPalm" id="P62267"/>
<dbReference type="CPTAC" id="non-CPTAC-3670"/>
<dbReference type="jPOST" id="P62267"/>
<dbReference type="PaxDb" id="10090-ENSMUSP00000054490"/>
<dbReference type="PeptideAtlas" id="P62267"/>
<dbReference type="ProteomicsDB" id="262731"/>
<dbReference type="Pumba" id="P62267"/>
<dbReference type="TopDownProteomics" id="P62267"/>
<dbReference type="DNASU" id="66475"/>
<dbReference type="Ensembl" id="ENSMUST00000051955.9">
    <property type="protein sequence ID" value="ENSMUSP00000054490.8"/>
    <property type="gene ID" value="ENSMUSG00000049517.9"/>
</dbReference>
<dbReference type="GeneID" id="66475"/>
<dbReference type="KEGG" id="mmu:66475"/>
<dbReference type="UCSC" id="uc007rjq.2">
    <property type="organism name" value="mouse"/>
</dbReference>
<dbReference type="AGR" id="MGI:1913725"/>
<dbReference type="CTD" id="6228"/>
<dbReference type="MGI" id="MGI:1913725">
    <property type="gene designation" value="Rps23"/>
</dbReference>
<dbReference type="VEuPathDB" id="HostDB:ENSMUSG00000049517"/>
<dbReference type="eggNOG" id="KOG1749">
    <property type="taxonomic scope" value="Eukaryota"/>
</dbReference>
<dbReference type="GeneTree" id="ENSGT00550000074784"/>
<dbReference type="HOGENOM" id="CLU_115574_0_1_1"/>
<dbReference type="InParanoid" id="P62267"/>
<dbReference type="OMA" id="KFRWSQR"/>
<dbReference type="OrthoDB" id="9758353at2759"/>
<dbReference type="PhylomeDB" id="P62267"/>
<dbReference type="TreeFam" id="TF300871"/>
<dbReference type="Reactome" id="R-MMU-156827">
    <property type="pathway name" value="L13a-mediated translational silencing of Ceruloplasmin expression"/>
</dbReference>
<dbReference type="Reactome" id="R-MMU-1799339">
    <property type="pathway name" value="SRP-dependent cotranslational protein targeting to membrane"/>
</dbReference>
<dbReference type="Reactome" id="R-MMU-6791226">
    <property type="pathway name" value="Major pathway of rRNA processing in the nucleolus and cytosol"/>
</dbReference>
<dbReference type="Reactome" id="R-MMU-72649">
    <property type="pathway name" value="Translation initiation complex formation"/>
</dbReference>
<dbReference type="Reactome" id="R-MMU-72689">
    <property type="pathway name" value="Formation of a pool of free 40S subunits"/>
</dbReference>
<dbReference type="Reactome" id="R-MMU-72695">
    <property type="pathway name" value="Formation of the ternary complex, and subsequently, the 43S complex"/>
</dbReference>
<dbReference type="Reactome" id="R-MMU-72702">
    <property type="pathway name" value="Ribosomal scanning and start codon recognition"/>
</dbReference>
<dbReference type="Reactome" id="R-MMU-72706">
    <property type="pathway name" value="GTP hydrolysis and joining of the 60S ribosomal subunit"/>
</dbReference>
<dbReference type="Reactome" id="R-MMU-9629569">
    <property type="pathway name" value="Protein hydroxylation"/>
</dbReference>
<dbReference type="Reactome" id="R-MMU-975956">
    <property type="pathway name" value="Nonsense Mediated Decay (NMD) independent of the Exon Junction Complex (EJC)"/>
</dbReference>
<dbReference type="Reactome" id="R-MMU-975957">
    <property type="pathway name" value="Nonsense Mediated Decay (NMD) enhanced by the Exon Junction Complex (EJC)"/>
</dbReference>
<dbReference type="BioGRID-ORCS" id="66475">
    <property type="hits" value="14 hits in 42 CRISPR screens"/>
</dbReference>
<dbReference type="ChiTaRS" id="Rps23">
    <property type="organism name" value="mouse"/>
</dbReference>
<dbReference type="PRO" id="PR:P62267"/>
<dbReference type="Proteomes" id="UP000000589">
    <property type="component" value="Chromosome 13"/>
</dbReference>
<dbReference type="RNAct" id="P62267">
    <property type="molecule type" value="protein"/>
</dbReference>
<dbReference type="Bgee" id="ENSMUSG00000049517">
    <property type="expression patterns" value="Expressed in epiblast (generic) and 64 other cell types or tissues"/>
</dbReference>
<dbReference type="GO" id="GO:0005737">
    <property type="term" value="C:cytoplasm"/>
    <property type="evidence" value="ECO:0000303"/>
    <property type="project" value="ComplexPortal"/>
</dbReference>
<dbReference type="GO" id="GO:0005829">
    <property type="term" value="C:cytosol"/>
    <property type="evidence" value="ECO:0000304"/>
    <property type="project" value="Reactome"/>
</dbReference>
<dbReference type="GO" id="GO:0022627">
    <property type="term" value="C:cytosolic small ribosomal subunit"/>
    <property type="evidence" value="ECO:0000314"/>
    <property type="project" value="UniProtKB"/>
</dbReference>
<dbReference type="GO" id="GO:0005730">
    <property type="term" value="C:nucleolus"/>
    <property type="evidence" value="ECO:0007669"/>
    <property type="project" value="UniProtKB-SubCell"/>
</dbReference>
<dbReference type="GO" id="GO:0098794">
    <property type="term" value="C:postsynapse"/>
    <property type="evidence" value="ECO:0000303"/>
    <property type="project" value="SynGO"/>
</dbReference>
<dbReference type="GO" id="GO:0005840">
    <property type="term" value="C:ribosome"/>
    <property type="evidence" value="ECO:0000303"/>
    <property type="project" value="SynGO"/>
</dbReference>
<dbReference type="GO" id="GO:0005791">
    <property type="term" value="C:rough endoplasmic reticulum"/>
    <property type="evidence" value="ECO:0007669"/>
    <property type="project" value="UniProtKB-SubCell"/>
</dbReference>
<dbReference type="GO" id="GO:0032040">
    <property type="term" value="C:small-subunit processome"/>
    <property type="evidence" value="ECO:0000250"/>
    <property type="project" value="UniProtKB"/>
</dbReference>
<dbReference type="GO" id="GO:0045202">
    <property type="term" value="C:synapse"/>
    <property type="evidence" value="ECO:0000314"/>
    <property type="project" value="SynGO"/>
</dbReference>
<dbReference type="GO" id="GO:0003735">
    <property type="term" value="F:structural constituent of ribosome"/>
    <property type="evidence" value="ECO:0000314"/>
    <property type="project" value="UniProtKB"/>
</dbReference>
<dbReference type="GO" id="GO:0002181">
    <property type="term" value="P:cytoplasmic translation"/>
    <property type="evidence" value="ECO:0000250"/>
    <property type="project" value="UniProtKB"/>
</dbReference>
<dbReference type="GO" id="GO:1990145">
    <property type="term" value="P:maintenance of translational fidelity"/>
    <property type="evidence" value="ECO:0000250"/>
    <property type="project" value="UniProtKB"/>
</dbReference>
<dbReference type="GO" id="GO:0042274">
    <property type="term" value="P:ribosomal small subunit biogenesis"/>
    <property type="evidence" value="ECO:0000250"/>
    <property type="project" value="UniProtKB"/>
</dbReference>
<dbReference type="GO" id="GO:0034063">
    <property type="term" value="P:stress granule assembly"/>
    <property type="evidence" value="ECO:0007669"/>
    <property type="project" value="Ensembl"/>
</dbReference>
<dbReference type="GO" id="GO:0006412">
    <property type="term" value="P:translation"/>
    <property type="evidence" value="ECO:0000250"/>
    <property type="project" value="UniProtKB"/>
</dbReference>
<dbReference type="CDD" id="cd03367">
    <property type="entry name" value="Ribosomal_S23"/>
    <property type="match status" value="1"/>
</dbReference>
<dbReference type="FunFam" id="2.40.50.140:FF:000007">
    <property type="entry name" value="40S ribosomal protein S23"/>
    <property type="match status" value="1"/>
</dbReference>
<dbReference type="Gene3D" id="2.40.50.140">
    <property type="entry name" value="Nucleic acid-binding proteins"/>
    <property type="match status" value="1"/>
</dbReference>
<dbReference type="InterPro" id="IPR012340">
    <property type="entry name" value="NA-bd_OB-fold"/>
</dbReference>
<dbReference type="InterPro" id="IPR006032">
    <property type="entry name" value="Ribosomal_uS12"/>
</dbReference>
<dbReference type="InterPro" id="IPR005680">
    <property type="entry name" value="Ribosomal_uS12_euk/arc"/>
</dbReference>
<dbReference type="NCBIfam" id="NF003254">
    <property type="entry name" value="PRK04211.1"/>
    <property type="match status" value="1"/>
</dbReference>
<dbReference type="NCBIfam" id="TIGR00982">
    <property type="entry name" value="uS12_E_A"/>
    <property type="match status" value="1"/>
</dbReference>
<dbReference type="PANTHER" id="PTHR11652">
    <property type="entry name" value="30S RIBOSOMAL PROTEIN S12 FAMILY MEMBER"/>
    <property type="match status" value="1"/>
</dbReference>
<dbReference type="Pfam" id="PF00164">
    <property type="entry name" value="Ribosom_S12_S23"/>
    <property type="match status" value="1"/>
</dbReference>
<dbReference type="PIRSF" id="PIRSF002133">
    <property type="entry name" value="Ribosomal_S12/S23"/>
    <property type="match status" value="1"/>
</dbReference>
<dbReference type="SUPFAM" id="SSF50249">
    <property type="entry name" value="Nucleic acid-binding proteins"/>
    <property type="match status" value="1"/>
</dbReference>
<dbReference type="PROSITE" id="PS00055">
    <property type="entry name" value="RIBOSOMAL_S12"/>
    <property type="match status" value="1"/>
</dbReference>
<comment type="function">
    <text evidence="1 4">Component of the ribosome, a large ribonucleoprotein complex responsible for the synthesis of proteins in the cell (PubMed:36517592). The small ribosomal subunit (SSU) binds messenger RNAs (mRNAs) and translates the encoded message by selecting cognate aminoacyl-transfer RNA (tRNA) molecules (PubMed:36517592). The large subunit (LSU) contains the ribosomal catalytic site termed the peptidyl transferase center (PTC), which catalyzes the formation of peptide bonds, thereby polymerizing the amino acids delivered by tRNAs into a polypeptide chain (PubMed:36517592). The nascent polypeptides leave the ribosome through a tunnel in the LSU and interact with protein factors that function in enzymatic processing, targeting, and the membrane insertion of nascent chains at the exit of the ribosomal tunnel (PubMed:36517592). Plays an important role in translational accuracy (By similarity). Part of the small subunit (SSU) processome, first precursor of the small eukaryotic ribosomal subunit. During the assembly of the SSU processome in the nucleolus, many ribosome biogenesis factors, an RNA chaperone and ribosomal proteins associate with the nascent pre-rRNA and work in concert to generate RNA folding, modifications, rearrangements and cleavage as well as targeted degradation of pre-ribosomal RNA by the RNA exosome (By similarity).</text>
</comment>
<comment type="subunit">
    <text evidence="1 4">Component of the 40S small ribosomal subunit. Part of the small subunit (SSU) processome, composed of more than 70 proteins and the RNA chaperone small nucleolar RNA (snoRNA) U3 (By similarity).</text>
</comment>
<comment type="subcellular location">
    <subcellularLocation>
        <location evidence="1">Cytoplasm</location>
        <location evidence="1">Cytosol</location>
    </subcellularLocation>
    <subcellularLocation>
        <location evidence="4">Cytoplasm</location>
    </subcellularLocation>
    <subcellularLocation>
        <location evidence="2">Rough endoplasmic reticulum</location>
    </subcellularLocation>
    <subcellularLocation>
        <location evidence="1">Nucleus</location>
        <location evidence="1">Nucleolus</location>
    </subcellularLocation>
    <text evidence="1 2">Detected on cytosolic polysomes (By similarity). Detected in ribosomes that are associated with the rough endoplasmic reticulum (By similarity).</text>
</comment>
<comment type="PTM">
    <text evidence="1">Hydroxylation at Pro-62 affects translation termination efficiency.</text>
</comment>
<comment type="similarity">
    <text evidence="5">Belongs to the universal ribosomal protein uS12 family.</text>
</comment>